<sequence>MAKKVQAYVKLQVAAGMANPSPPVGPALGQQGVNIMEFCKAFNAKTDSIEKGLPIPVVITVYADRSFTFVTKTPPAAVLLKKAAGIKSGSGKPNKDKVGKISRAQLQEIAQTKAADMTGADIEAMTRSIEGTARSMGLVVED</sequence>
<name>RL11_SALPC</name>
<feature type="chain" id="PRO_1000195711" description="Large ribosomal subunit protein uL11">
    <location>
        <begin position="1"/>
        <end position="142"/>
    </location>
</feature>
<comment type="function">
    <text evidence="1">Forms part of the ribosomal stalk which helps the ribosome interact with GTP-bound translation factors.</text>
</comment>
<comment type="subunit">
    <text evidence="1">Part of the ribosomal stalk of the 50S ribosomal subunit. Interacts with L10 and the large rRNA to form the base of the stalk. L10 forms an elongated spine to which L12 dimers bind in a sequential fashion forming a multimeric L10(L12)X complex.</text>
</comment>
<comment type="PTM">
    <text evidence="1">One or more lysine residues are methylated.</text>
</comment>
<comment type="similarity">
    <text evidence="1">Belongs to the universal ribosomal protein uL11 family.</text>
</comment>
<keyword id="KW-0488">Methylation</keyword>
<keyword id="KW-0687">Ribonucleoprotein</keyword>
<keyword id="KW-0689">Ribosomal protein</keyword>
<keyword id="KW-0694">RNA-binding</keyword>
<keyword id="KW-0699">rRNA-binding</keyword>
<accession>C0Q2R3</accession>
<dbReference type="EMBL" id="CP000857">
    <property type="protein sequence ID" value="ACN48049.1"/>
    <property type="molecule type" value="Genomic_DNA"/>
</dbReference>
<dbReference type="RefSeq" id="WP_001085926.1">
    <property type="nucleotide sequence ID" value="NC_012125.1"/>
</dbReference>
<dbReference type="SMR" id="C0Q2R3"/>
<dbReference type="GeneID" id="93777911"/>
<dbReference type="KEGG" id="sei:SPC_3981"/>
<dbReference type="HOGENOM" id="CLU_074237_2_0_6"/>
<dbReference type="Proteomes" id="UP000001599">
    <property type="component" value="Chromosome"/>
</dbReference>
<dbReference type="GO" id="GO:0022625">
    <property type="term" value="C:cytosolic large ribosomal subunit"/>
    <property type="evidence" value="ECO:0007669"/>
    <property type="project" value="TreeGrafter"/>
</dbReference>
<dbReference type="GO" id="GO:0070180">
    <property type="term" value="F:large ribosomal subunit rRNA binding"/>
    <property type="evidence" value="ECO:0007669"/>
    <property type="project" value="UniProtKB-UniRule"/>
</dbReference>
<dbReference type="GO" id="GO:0003735">
    <property type="term" value="F:structural constituent of ribosome"/>
    <property type="evidence" value="ECO:0007669"/>
    <property type="project" value="InterPro"/>
</dbReference>
<dbReference type="GO" id="GO:0006412">
    <property type="term" value="P:translation"/>
    <property type="evidence" value="ECO:0007669"/>
    <property type="project" value="UniProtKB-UniRule"/>
</dbReference>
<dbReference type="CDD" id="cd00349">
    <property type="entry name" value="Ribosomal_L11"/>
    <property type="match status" value="1"/>
</dbReference>
<dbReference type="FunFam" id="1.10.10.250:FF:000001">
    <property type="entry name" value="50S ribosomal protein L11"/>
    <property type="match status" value="1"/>
</dbReference>
<dbReference type="FunFam" id="3.30.1550.10:FF:000001">
    <property type="entry name" value="50S ribosomal protein L11"/>
    <property type="match status" value="1"/>
</dbReference>
<dbReference type="Gene3D" id="1.10.10.250">
    <property type="entry name" value="Ribosomal protein L11, C-terminal domain"/>
    <property type="match status" value="1"/>
</dbReference>
<dbReference type="Gene3D" id="3.30.1550.10">
    <property type="entry name" value="Ribosomal protein L11/L12, N-terminal domain"/>
    <property type="match status" value="1"/>
</dbReference>
<dbReference type="HAMAP" id="MF_00736">
    <property type="entry name" value="Ribosomal_uL11"/>
    <property type="match status" value="1"/>
</dbReference>
<dbReference type="InterPro" id="IPR000911">
    <property type="entry name" value="Ribosomal_uL11"/>
</dbReference>
<dbReference type="InterPro" id="IPR006519">
    <property type="entry name" value="Ribosomal_uL11_bac-typ"/>
</dbReference>
<dbReference type="InterPro" id="IPR020783">
    <property type="entry name" value="Ribosomal_uL11_C"/>
</dbReference>
<dbReference type="InterPro" id="IPR036769">
    <property type="entry name" value="Ribosomal_uL11_C_sf"/>
</dbReference>
<dbReference type="InterPro" id="IPR020785">
    <property type="entry name" value="Ribosomal_uL11_CS"/>
</dbReference>
<dbReference type="InterPro" id="IPR020784">
    <property type="entry name" value="Ribosomal_uL11_N"/>
</dbReference>
<dbReference type="InterPro" id="IPR036796">
    <property type="entry name" value="Ribosomal_uL11_N_sf"/>
</dbReference>
<dbReference type="NCBIfam" id="TIGR01632">
    <property type="entry name" value="L11_bact"/>
    <property type="match status" value="1"/>
</dbReference>
<dbReference type="PANTHER" id="PTHR11661">
    <property type="entry name" value="60S RIBOSOMAL PROTEIN L12"/>
    <property type="match status" value="1"/>
</dbReference>
<dbReference type="PANTHER" id="PTHR11661:SF1">
    <property type="entry name" value="LARGE RIBOSOMAL SUBUNIT PROTEIN UL11M"/>
    <property type="match status" value="1"/>
</dbReference>
<dbReference type="Pfam" id="PF00298">
    <property type="entry name" value="Ribosomal_L11"/>
    <property type="match status" value="1"/>
</dbReference>
<dbReference type="Pfam" id="PF03946">
    <property type="entry name" value="Ribosomal_L11_N"/>
    <property type="match status" value="1"/>
</dbReference>
<dbReference type="SMART" id="SM00649">
    <property type="entry name" value="RL11"/>
    <property type="match status" value="1"/>
</dbReference>
<dbReference type="SUPFAM" id="SSF54747">
    <property type="entry name" value="Ribosomal L11/L12e N-terminal domain"/>
    <property type="match status" value="1"/>
</dbReference>
<dbReference type="SUPFAM" id="SSF46906">
    <property type="entry name" value="Ribosomal protein L11, C-terminal domain"/>
    <property type="match status" value="1"/>
</dbReference>
<dbReference type="PROSITE" id="PS00359">
    <property type="entry name" value="RIBOSOMAL_L11"/>
    <property type="match status" value="1"/>
</dbReference>
<evidence type="ECO:0000255" key="1">
    <source>
        <dbReference type="HAMAP-Rule" id="MF_00736"/>
    </source>
</evidence>
<evidence type="ECO:0000305" key="2"/>
<proteinExistence type="inferred from homology"/>
<protein>
    <recommendedName>
        <fullName evidence="1">Large ribosomal subunit protein uL11</fullName>
    </recommendedName>
    <alternativeName>
        <fullName evidence="2">50S ribosomal protein L11</fullName>
    </alternativeName>
</protein>
<reference key="1">
    <citation type="journal article" date="2009" name="PLoS ONE">
        <title>Salmonella paratyphi C: genetic divergence from Salmonella choleraesuis and pathogenic convergence with Salmonella typhi.</title>
        <authorList>
            <person name="Liu W.-Q."/>
            <person name="Feng Y."/>
            <person name="Wang Y."/>
            <person name="Zou Q.-H."/>
            <person name="Chen F."/>
            <person name="Guo J.-T."/>
            <person name="Peng Y.-H."/>
            <person name="Jin Y."/>
            <person name="Li Y.-G."/>
            <person name="Hu S.-N."/>
            <person name="Johnston R.N."/>
            <person name="Liu G.-R."/>
            <person name="Liu S.-L."/>
        </authorList>
    </citation>
    <scope>NUCLEOTIDE SEQUENCE [LARGE SCALE GENOMIC DNA]</scope>
    <source>
        <strain>RKS4594</strain>
    </source>
</reference>
<gene>
    <name evidence="1" type="primary">rplK</name>
    <name type="ordered locus">SPC_3981</name>
</gene>
<organism>
    <name type="scientific">Salmonella paratyphi C (strain RKS4594)</name>
    <dbReference type="NCBI Taxonomy" id="476213"/>
    <lineage>
        <taxon>Bacteria</taxon>
        <taxon>Pseudomonadati</taxon>
        <taxon>Pseudomonadota</taxon>
        <taxon>Gammaproteobacteria</taxon>
        <taxon>Enterobacterales</taxon>
        <taxon>Enterobacteriaceae</taxon>
        <taxon>Salmonella</taxon>
    </lineage>
</organism>